<protein>
    <recommendedName>
        <fullName evidence="1">Porphobilinogen deaminase</fullName>
        <shortName evidence="1">PBG</shortName>
        <ecNumber evidence="1">2.5.1.61</ecNumber>
    </recommendedName>
    <alternativeName>
        <fullName evidence="1">Hydroxymethylbilane synthase</fullName>
        <shortName evidence="1">HMBS</shortName>
    </alternativeName>
    <alternativeName>
        <fullName evidence="1">Pre-uroporphyrinogen synthase</fullName>
    </alternativeName>
</protein>
<evidence type="ECO:0000255" key="1">
    <source>
        <dbReference type="HAMAP-Rule" id="MF_00260"/>
    </source>
</evidence>
<comment type="function">
    <text evidence="1">Tetrapolymerization of the monopyrrole PBG into the hydroxymethylbilane pre-uroporphyrinogen in several discrete steps.</text>
</comment>
<comment type="catalytic activity">
    <reaction evidence="1">
        <text>4 porphobilinogen + H2O = hydroxymethylbilane + 4 NH4(+)</text>
        <dbReference type="Rhea" id="RHEA:13185"/>
        <dbReference type="ChEBI" id="CHEBI:15377"/>
        <dbReference type="ChEBI" id="CHEBI:28938"/>
        <dbReference type="ChEBI" id="CHEBI:57845"/>
        <dbReference type="ChEBI" id="CHEBI:58126"/>
        <dbReference type="EC" id="2.5.1.61"/>
    </reaction>
</comment>
<comment type="cofactor">
    <cofactor evidence="1">
        <name>dipyrromethane</name>
        <dbReference type="ChEBI" id="CHEBI:60342"/>
    </cofactor>
    <text evidence="1">Binds 1 dipyrromethane group covalently.</text>
</comment>
<comment type="pathway">
    <text evidence="1">Porphyrin-containing compound metabolism; protoporphyrin-IX biosynthesis; coproporphyrinogen-III from 5-aminolevulinate: step 2/4.</text>
</comment>
<comment type="subunit">
    <text evidence="1">Monomer.</text>
</comment>
<comment type="miscellaneous">
    <text evidence="1">The porphobilinogen subunits are added to the dipyrromethane group.</text>
</comment>
<comment type="similarity">
    <text evidence="1">Belongs to the HMBS family.</text>
</comment>
<proteinExistence type="inferred from homology"/>
<organism>
    <name type="scientific">Mannheimia succiniciproducens (strain KCTC 0769BP / MBEL55E)</name>
    <dbReference type="NCBI Taxonomy" id="221988"/>
    <lineage>
        <taxon>Bacteria</taxon>
        <taxon>Pseudomonadati</taxon>
        <taxon>Pseudomonadota</taxon>
        <taxon>Gammaproteobacteria</taxon>
        <taxon>Pasteurellales</taxon>
        <taxon>Pasteurellaceae</taxon>
        <taxon>Basfia</taxon>
    </lineage>
</organism>
<keyword id="KW-0627">Porphyrin biosynthesis</keyword>
<keyword id="KW-0808">Transferase</keyword>
<feature type="chain" id="PRO_0000142955" description="Porphobilinogen deaminase">
    <location>
        <begin position="1"/>
        <end position="310"/>
    </location>
</feature>
<feature type="modified residue" description="S-(dipyrrolylmethanemethyl)cysteine" evidence="1">
    <location>
        <position position="243"/>
    </location>
</feature>
<accession>Q65VX7</accession>
<dbReference type="EC" id="2.5.1.61" evidence="1"/>
<dbReference type="EMBL" id="AE016827">
    <property type="protein sequence ID" value="AAU36883.1"/>
    <property type="molecule type" value="Genomic_DNA"/>
</dbReference>
<dbReference type="RefSeq" id="WP_011199458.1">
    <property type="nucleotide sequence ID" value="NC_006300.1"/>
</dbReference>
<dbReference type="SMR" id="Q65VX7"/>
<dbReference type="STRING" id="221988.MS0276"/>
<dbReference type="KEGG" id="msu:MS0276"/>
<dbReference type="eggNOG" id="COG0181">
    <property type="taxonomic scope" value="Bacteria"/>
</dbReference>
<dbReference type="HOGENOM" id="CLU_019704_0_2_6"/>
<dbReference type="OrthoDB" id="9810298at2"/>
<dbReference type="UniPathway" id="UPA00251">
    <property type="reaction ID" value="UER00319"/>
</dbReference>
<dbReference type="Proteomes" id="UP000000607">
    <property type="component" value="Chromosome"/>
</dbReference>
<dbReference type="GO" id="GO:0005737">
    <property type="term" value="C:cytoplasm"/>
    <property type="evidence" value="ECO:0007669"/>
    <property type="project" value="TreeGrafter"/>
</dbReference>
<dbReference type="GO" id="GO:0004418">
    <property type="term" value="F:hydroxymethylbilane synthase activity"/>
    <property type="evidence" value="ECO:0007669"/>
    <property type="project" value="UniProtKB-UniRule"/>
</dbReference>
<dbReference type="GO" id="GO:0006782">
    <property type="term" value="P:protoporphyrinogen IX biosynthetic process"/>
    <property type="evidence" value="ECO:0007669"/>
    <property type="project" value="UniProtKB-UniRule"/>
</dbReference>
<dbReference type="CDD" id="cd13646">
    <property type="entry name" value="PBP2_EcHMBS_like"/>
    <property type="match status" value="1"/>
</dbReference>
<dbReference type="FunFam" id="3.30.160.40:FF:000002">
    <property type="entry name" value="Porphobilinogen deaminase"/>
    <property type="match status" value="1"/>
</dbReference>
<dbReference type="FunFam" id="3.40.190.10:FF:000004">
    <property type="entry name" value="Porphobilinogen deaminase"/>
    <property type="match status" value="1"/>
</dbReference>
<dbReference type="FunFam" id="3.40.190.10:FF:000005">
    <property type="entry name" value="Porphobilinogen deaminase"/>
    <property type="match status" value="1"/>
</dbReference>
<dbReference type="Gene3D" id="3.40.190.10">
    <property type="entry name" value="Periplasmic binding protein-like II"/>
    <property type="match status" value="2"/>
</dbReference>
<dbReference type="Gene3D" id="3.30.160.40">
    <property type="entry name" value="Porphobilinogen deaminase, C-terminal domain"/>
    <property type="match status" value="1"/>
</dbReference>
<dbReference type="HAMAP" id="MF_00260">
    <property type="entry name" value="Porphobil_deam"/>
    <property type="match status" value="1"/>
</dbReference>
<dbReference type="InterPro" id="IPR000860">
    <property type="entry name" value="HemC"/>
</dbReference>
<dbReference type="InterPro" id="IPR022419">
    <property type="entry name" value="Porphobilin_deaminase_cofac_BS"/>
</dbReference>
<dbReference type="InterPro" id="IPR022417">
    <property type="entry name" value="Porphobilin_deaminase_N"/>
</dbReference>
<dbReference type="InterPro" id="IPR022418">
    <property type="entry name" value="Porphobilinogen_deaminase_C"/>
</dbReference>
<dbReference type="InterPro" id="IPR036803">
    <property type="entry name" value="Porphobilinogen_deaminase_C_sf"/>
</dbReference>
<dbReference type="NCBIfam" id="TIGR00212">
    <property type="entry name" value="hemC"/>
    <property type="match status" value="1"/>
</dbReference>
<dbReference type="PANTHER" id="PTHR11557">
    <property type="entry name" value="PORPHOBILINOGEN DEAMINASE"/>
    <property type="match status" value="1"/>
</dbReference>
<dbReference type="PANTHER" id="PTHR11557:SF0">
    <property type="entry name" value="PORPHOBILINOGEN DEAMINASE"/>
    <property type="match status" value="1"/>
</dbReference>
<dbReference type="Pfam" id="PF01379">
    <property type="entry name" value="Porphobil_deam"/>
    <property type="match status" value="1"/>
</dbReference>
<dbReference type="Pfam" id="PF03900">
    <property type="entry name" value="Porphobil_deamC"/>
    <property type="match status" value="1"/>
</dbReference>
<dbReference type="PIRSF" id="PIRSF001438">
    <property type="entry name" value="4pyrrol_synth_OHMeBilane_synth"/>
    <property type="match status" value="1"/>
</dbReference>
<dbReference type="PRINTS" id="PR00151">
    <property type="entry name" value="PORPHBDMNASE"/>
</dbReference>
<dbReference type="SUPFAM" id="SSF53850">
    <property type="entry name" value="Periplasmic binding protein-like II"/>
    <property type="match status" value="1"/>
</dbReference>
<dbReference type="SUPFAM" id="SSF54782">
    <property type="entry name" value="Porphobilinogen deaminase (hydroxymethylbilane synthase), C-terminal domain"/>
    <property type="match status" value="1"/>
</dbReference>
<dbReference type="PROSITE" id="PS00533">
    <property type="entry name" value="PORPHOBILINOGEN_DEAM"/>
    <property type="match status" value="1"/>
</dbReference>
<sequence length="310" mass="33572">MNNKNHLKIATRQSPLALWQANYVKDRLTALYPDLQVELVTMVTKGDVILDTPLAKIGGKGLFVKELEHALLNHEADIAVHSMKDVPMEFPQGLGLSVICKREDPRDAFVSNKYRSLAELPQGAIVGTSSLRRQCQLKSLRPDLDIRSLRGNVGTRLSKLDNGDYDAIILASAGLIRLGMAERIASFIETDISLPAAGQGAVGIECRVDDELVQSLLAPLAHQETTICVLAERAMNNRLQGGCQVPIGGFAQVKNGEVFLRALVGATDGSQIIRAEGKSAVENAEVLGVQIAEDLLQQGADKILKSVYQD</sequence>
<gene>
    <name evidence="1" type="primary">hemC</name>
    <name type="ordered locus">MS0276</name>
</gene>
<reference key="1">
    <citation type="journal article" date="2004" name="Nat. Biotechnol.">
        <title>The genome sequence of the capnophilic rumen bacterium Mannheimia succiniciproducens.</title>
        <authorList>
            <person name="Hong S.H."/>
            <person name="Kim J.S."/>
            <person name="Lee S.Y."/>
            <person name="In Y.H."/>
            <person name="Choi S.S."/>
            <person name="Rih J.-K."/>
            <person name="Kim C.H."/>
            <person name="Jeong H."/>
            <person name="Hur C.G."/>
            <person name="Kim J.J."/>
        </authorList>
    </citation>
    <scope>NUCLEOTIDE SEQUENCE [LARGE SCALE GENOMIC DNA]</scope>
    <source>
        <strain>KCTC 0769BP / MBEL55E</strain>
    </source>
</reference>
<name>HEM3_MANSM</name>